<comment type="function">
    <text evidence="1">Catalyzes the hydrolysis of N-formyl-L-kynurenine to L-kynurenine, the second step in the kynurenine pathway of tryptophan degradation.</text>
</comment>
<comment type="catalytic activity">
    <reaction evidence="1">
        <text>N-formyl-L-kynurenine + H2O = L-kynurenine + formate + H(+)</text>
        <dbReference type="Rhea" id="RHEA:13009"/>
        <dbReference type="ChEBI" id="CHEBI:15377"/>
        <dbReference type="ChEBI" id="CHEBI:15378"/>
        <dbReference type="ChEBI" id="CHEBI:15740"/>
        <dbReference type="ChEBI" id="CHEBI:57959"/>
        <dbReference type="ChEBI" id="CHEBI:58629"/>
        <dbReference type="EC" id="3.5.1.9"/>
    </reaction>
</comment>
<comment type="cofactor">
    <cofactor evidence="1">
        <name>Zn(2+)</name>
        <dbReference type="ChEBI" id="CHEBI:29105"/>
    </cofactor>
    <text evidence="1">Binds 2 zinc ions per subunit.</text>
</comment>
<comment type="pathway">
    <text evidence="1">Amino-acid degradation; L-tryptophan degradation via kynurenine pathway; L-kynurenine from L-tryptophan: step 2/2.</text>
</comment>
<comment type="subunit">
    <text evidence="1">Homodimer.</text>
</comment>
<comment type="similarity">
    <text evidence="1">Belongs to the Cyclase 1 superfamily. KynB family.</text>
</comment>
<comment type="sequence caution" evidence="2">
    <conflict type="erroneous initiation">
        <sequence resource="EMBL-CDS" id="ABN81891"/>
    </conflict>
    <text>Extended N-terminus.</text>
</comment>
<reference key="1">
    <citation type="journal article" date="2010" name="Genome Biol. Evol.">
        <title>Continuing evolution of Burkholderia mallei through genome reduction and large-scale rearrangements.</title>
        <authorList>
            <person name="Losada L."/>
            <person name="Ronning C.M."/>
            <person name="DeShazer D."/>
            <person name="Woods D."/>
            <person name="Fedorova N."/>
            <person name="Kim H.S."/>
            <person name="Shabalina S.A."/>
            <person name="Pearson T.R."/>
            <person name="Brinkac L."/>
            <person name="Tan P."/>
            <person name="Nandi T."/>
            <person name="Crabtree J."/>
            <person name="Badger J."/>
            <person name="Beckstrom-Sternberg S."/>
            <person name="Saqib M."/>
            <person name="Schutzer S.E."/>
            <person name="Keim P."/>
            <person name="Nierman W.C."/>
        </authorList>
    </citation>
    <scope>NUCLEOTIDE SEQUENCE [LARGE SCALE GENOMIC DNA]</scope>
    <source>
        <strain>668</strain>
    </source>
</reference>
<keyword id="KW-0378">Hydrolase</keyword>
<keyword id="KW-0479">Metal-binding</keyword>
<keyword id="KW-0823">Tryptophan catabolism</keyword>
<keyword id="KW-0862">Zinc</keyword>
<sequence length="213" mass="22624">MDTIWDISPPIAPATPVWPGDTPVGIERVWRIEAGSPVNVARVTLSPHTGAHADAPLHYDADGAPIGAVPLDAYLGRCRVIHCIGARSAVTPGHVRAALDGAPPRVLLRTYGQAPQHAWDSAFCAVAPETIDLLAAHGVRLVGIDTPSLDPQESKTMDAHRRIRAHRMAILEGLVLDEIAAGDYELIALPLKFATLDASPVRAVLRALPAAPR</sequence>
<evidence type="ECO:0000255" key="1">
    <source>
        <dbReference type="HAMAP-Rule" id="MF_01969"/>
    </source>
</evidence>
<evidence type="ECO:0000305" key="2"/>
<dbReference type="EC" id="3.5.1.9" evidence="1"/>
<dbReference type="EMBL" id="CP000570">
    <property type="protein sequence ID" value="ABN81891.2"/>
    <property type="status" value="ALT_INIT"/>
    <property type="molecule type" value="Genomic_DNA"/>
</dbReference>
<dbReference type="RefSeq" id="WP_038735592.1">
    <property type="nucleotide sequence ID" value="NC_009074.1"/>
</dbReference>
<dbReference type="SMR" id="A3N6H4"/>
<dbReference type="KEGG" id="bpd:BURPS668_0894"/>
<dbReference type="HOGENOM" id="CLU_030671_3_1_4"/>
<dbReference type="UniPathway" id="UPA00333">
    <property type="reaction ID" value="UER00454"/>
</dbReference>
<dbReference type="GO" id="GO:0004061">
    <property type="term" value="F:arylformamidase activity"/>
    <property type="evidence" value="ECO:0000250"/>
    <property type="project" value="UniProtKB"/>
</dbReference>
<dbReference type="GO" id="GO:0004328">
    <property type="term" value="F:formamidase activity"/>
    <property type="evidence" value="ECO:0007669"/>
    <property type="project" value="InterPro"/>
</dbReference>
<dbReference type="GO" id="GO:0008270">
    <property type="term" value="F:zinc ion binding"/>
    <property type="evidence" value="ECO:0007669"/>
    <property type="project" value="UniProtKB-UniRule"/>
</dbReference>
<dbReference type="GO" id="GO:0043420">
    <property type="term" value="P:anthranilate metabolic process"/>
    <property type="evidence" value="ECO:0000250"/>
    <property type="project" value="UniProtKB"/>
</dbReference>
<dbReference type="GO" id="GO:0019441">
    <property type="term" value="P:L-tryptophan catabolic process to kynurenine"/>
    <property type="evidence" value="ECO:0000250"/>
    <property type="project" value="UniProtKB"/>
</dbReference>
<dbReference type="FunFam" id="3.50.30.50:FF:000001">
    <property type="entry name" value="Kynurenine formamidase"/>
    <property type="match status" value="1"/>
</dbReference>
<dbReference type="Gene3D" id="3.50.30.50">
    <property type="entry name" value="Putative cyclase"/>
    <property type="match status" value="1"/>
</dbReference>
<dbReference type="HAMAP" id="MF_01969">
    <property type="entry name" value="KynB"/>
    <property type="match status" value="1"/>
</dbReference>
<dbReference type="InterPro" id="IPR007325">
    <property type="entry name" value="KFase/CYL"/>
</dbReference>
<dbReference type="InterPro" id="IPR037175">
    <property type="entry name" value="KFase_sf"/>
</dbReference>
<dbReference type="InterPro" id="IPR017484">
    <property type="entry name" value="Kynurenine_formamidase_bac"/>
</dbReference>
<dbReference type="NCBIfam" id="TIGR03035">
    <property type="entry name" value="trp_arylform"/>
    <property type="match status" value="1"/>
</dbReference>
<dbReference type="PANTHER" id="PTHR31118">
    <property type="entry name" value="CYCLASE-LIKE PROTEIN 2"/>
    <property type="match status" value="1"/>
</dbReference>
<dbReference type="PANTHER" id="PTHR31118:SF32">
    <property type="entry name" value="KYNURENINE FORMAMIDASE"/>
    <property type="match status" value="1"/>
</dbReference>
<dbReference type="Pfam" id="PF04199">
    <property type="entry name" value="Cyclase"/>
    <property type="match status" value="1"/>
</dbReference>
<dbReference type="SUPFAM" id="SSF102198">
    <property type="entry name" value="Putative cyclase"/>
    <property type="match status" value="1"/>
</dbReference>
<name>KYNB_BURP6</name>
<feature type="chain" id="PRO_0000362112" description="Kynurenine formamidase">
    <location>
        <begin position="1"/>
        <end position="213"/>
    </location>
</feature>
<feature type="active site" description="Proton donor/acceptor" evidence="1">
    <location>
        <position position="58"/>
    </location>
</feature>
<feature type="binding site" evidence="1">
    <location>
        <position position="18"/>
    </location>
    <ligand>
        <name>substrate</name>
    </ligand>
</feature>
<feature type="binding site" evidence="1">
    <location>
        <position position="48"/>
    </location>
    <ligand>
        <name>Zn(2+)</name>
        <dbReference type="ChEBI" id="CHEBI:29105"/>
        <label>1</label>
    </ligand>
</feature>
<feature type="binding site" evidence="1">
    <location>
        <position position="52"/>
    </location>
    <ligand>
        <name>Zn(2+)</name>
        <dbReference type="ChEBI" id="CHEBI:29105"/>
        <label>1</label>
    </ligand>
</feature>
<feature type="binding site" evidence="1">
    <location>
        <position position="54"/>
    </location>
    <ligand>
        <name>Zn(2+)</name>
        <dbReference type="ChEBI" id="CHEBI:29105"/>
        <label>1</label>
    </ligand>
</feature>
<feature type="binding site" evidence="1">
    <location>
        <position position="54"/>
    </location>
    <ligand>
        <name>Zn(2+)</name>
        <dbReference type="ChEBI" id="CHEBI:29105"/>
        <label>2</label>
    </ligand>
</feature>
<feature type="binding site" evidence="1">
    <location>
        <position position="160"/>
    </location>
    <ligand>
        <name>Zn(2+)</name>
        <dbReference type="ChEBI" id="CHEBI:29105"/>
        <label>2</label>
    </ligand>
</feature>
<feature type="binding site" evidence="1">
    <location>
        <position position="172"/>
    </location>
    <ligand>
        <name>Zn(2+)</name>
        <dbReference type="ChEBI" id="CHEBI:29105"/>
        <label>1</label>
    </ligand>
</feature>
<feature type="binding site" evidence="1">
    <location>
        <position position="172"/>
    </location>
    <ligand>
        <name>Zn(2+)</name>
        <dbReference type="ChEBI" id="CHEBI:29105"/>
        <label>2</label>
    </ligand>
</feature>
<protein>
    <recommendedName>
        <fullName evidence="1">Kynurenine formamidase</fullName>
        <shortName evidence="1">KFA</shortName>
        <shortName evidence="1">KFase</shortName>
        <ecNumber evidence="1">3.5.1.9</ecNumber>
    </recommendedName>
    <alternativeName>
        <fullName evidence="1">Arylformamidase</fullName>
    </alternativeName>
    <alternativeName>
        <fullName evidence="1">N-formylkynurenine formamidase</fullName>
        <shortName evidence="1">FKF</shortName>
    </alternativeName>
</protein>
<proteinExistence type="inferred from homology"/>
<gene>
    <name evidence="1" type="primary">kynB</name>
    <name type="ordered locus">BURPS668_0894</name>
</gene>
<organism>
    <name type="scientific">Burkholderia pseudomallei (strain 668)</name>
    <dbReference type="NCBI Taxonomy" id="320373"/>
    <lineage>
        <taxon>Bacteria</taxon>
        <taxon>Pseudomonadati</taxon>
        <taxon>Pseudomonadota</taxon>
        <taxon>Betaproteobacteria</taxon>
        <taxon>Burkholderiales</taxon>
        <taxon>Burkholderiaceae</taxon>
        <taxon>Burkholderia</taxon>
        <taxon>pseudomallei group</taxon>
    </lineage>
</organism>
<accession>A3N6H4</accession>